<dbReference type="EMBL" id="CP000750">
    <property type="protein sequence ID" value="ABS02201.1"/>
    <property type="molecule type" value="Genomic_DNA"/>
</dbReference>
<dbReference type="RefSeq" id="WP_012084954.1">
    <property type="nucleotide sequence ID" value="NC_009664.2"/>
</dbReference>
<dbReference type="SMR" id="A6W5W2"/>
<dbReference type="STRING" id="266940.Krad_0712"/>
<dbReference type="KEGG" id="kra:Krad_0712"/>
<dbReference type="eggNOG" id="COG0257">
    <property type="taxonomic scope" value="Bacteria"/>
</dbReference>
<dbReference type="HOGENOM" id="CLU_135723_6_2_11"/>
<dbReference type="OrthoDB" id="9802520at2"/>
<dbReference type="Proteomes" id="UP000001116">
    <property type="component" value="Chromosome"/>
</dbReference>
<dbReference type="GO" id="GO:0005737">
    <property type="term" value="C:cytoplasm"/>
    <property type="evidence" value="ECO:0007669"/>
    <property type="project" value="UniProtKB-ARBA"/>
</dbReference>
<dbReference type="GO" id="GO:1990904">
    <property type="term" value="C:ribonucleoprotein complex"/>
    <property type="evidence" value="ECO:0007669"/>
    <property type="project" value="UniProtKB-KW"/>
</dbReference>
<dbReference type="GO" id="GO:0005840">
    <property type="term" value="C:ribosome"/>
    <property type="evidence" value="ECO:0007669"/>
    <property type="project" value="UniProtKB-KW"/>
</dbReference>
<dbReference type="GO" id="GO:0003735">
    <property type="term" value="F:structural constituent of ribosome"/>
    <property type="evidence" value="ECO:0007669"/>
    <property type="project" value="InterPro"/>
</dbReference>
<dbReference type="GO" id="GO:0006412">
    <property type="term" value="P:translation"/>
    <property type="evidence" value="ECO:0007669"/>
    <property type="project" value="UniProtKB-UniRule"/>
</dbReference>
<dbReference type="HAMAP" id="MF_00251">
    <property type="entry name" value="Ribosomal_bL36"/>
    <property type="match status" value="1"/>
</dbReference>
<dbReference type="InterPro" id="IPR000473">
    <property type="entry name" value="Ribosomal_bL36"/>
</dbReference>
<dbReference type="InterPro" id="IPR035977">
    <property type="entry name" value="Ribosomal_bL36_sp"/>
</dbReference>
<dbReference type="NCBIfam" id="TIGR01022">
    <property type="entry name" value="rpmJ_bact"/>
    <property type="match status" value="1"/>
</dbReference>
<dbReference type="PANTHER" id="PTHR42888">
    <property type="entry name" value="50S RIBOSOMAL PROTEIN L36, CHLOROPLASTIC"/>
    <property type="match status" value="1"/>
</dbReference>
<dbReference type="PANTHER" id="PTHR42888:SF1">
    <property type="entry name" value="LARGE RIBOSOMAL SUBUNIT PROTEIN BL36C"/>
    <property type="match status" value="1"/>
</dbReference>
<dbReference type="Pfam" id="PF00444">
    <property type="entry name" value="Ribosomal_L36"/>
    <property type="match status" value="1"/>
</dbReference>
<dbReference type="SUPFAM" id="SSF57840">
    <property type="entry name" value="Ribosomal protein L36"/>
    <property type="match status" value="1"/>
</dbReference>
<dbReference type="PROSITE" id="PS00828">
    <property type="entry name" value="RIBOSOMAL_L36"/>
    <property type="match status" value="1"/>
</dbReference>
<protein>
    <recommendedName>
        <fullName evidence="1">Large ribosomal subunit protein bL36B</fullName>
    </recommendedName>
    <alternativeName>
        <fullName evidence="2">50S ribosomal protein L36 2</fullName>
    </alternativeName>
</protein>
<reference key="1">
    <citation type="journal article" date="2008" name="PLoS ONE">
        <title>Survival in nuclear waste, extreme resistance, and potential applications gleaned from the genome sequence of Kineococcus radiotolerans SRS30216.</title>
        <authorList>
            <person name="Bagwell C.E."/>
            <person name="Bhat S."/>
            <person name="Hawkins G.M."/>
            <person name="Smith B.W."/>
            <person name="Biswas T."/>
            <person name="Hoover T.R."/>
            <person name="Saunders E."/>
            <person name="Han C.S."/>
            <person name="Tsodikov O.V."/>
            <person name="Shimkets L.J."/>
        </authorList>
    </citation>
    <scope>NUCLEOTIDE SEQUENCE [LARGE SCALE GENOMIC DNA]</scope>
    <source>
        <strain>ATCC BAA-149 / DSM 14245 / SRS30216</strain>
    </source>
</reference>
<sequence length="37" mass="4417">MKVKPSVKKICDKCKVIRRHGRVMIICENLRHKQRQG</sequence>
<evidence type="ECO:0000255" key="1">
    <source>
        <dbReference type="HAMAP-Rule" id="MF_00251"/>
    </source>
</evidence>
<evidence type="ECO:0000305" key="2"/>
<comment type="similarity">
    <text evidence="1">Belongs to the bacterial ribosomal protein bL36 family.</text>
</comment>
<feature type="chain" id="PRO_0000344683" description="Large ribosomal subunit protein bL36B">
    <location>
        <begin position="1"/>
        <end position="37"/>
    </location>
</feature>
<name>RL362_KINRD</name>
<organism>
    <name type="scientific">Kineococcus radiotolerans (strain ATCC BAA-149 / DSM 14245 / SRS30216)</name>
    <dbReference type="NCBI Taxonomy" id="266940"/>
    <lineage>
        <taxon>Bacteria</taxon>
        <taxon>Bacillati</taxon>
        <taxon>Actinomycetota</taxon>
        <taxon>Actinomycetes</taxon>
        <taxon>Kineosporiales</taxon>
        <taxon>Kineosporiaceae</taxon>
        <taxon>Kineococcus</taxon>
    </lineage>
</organism>
<proteinExistence type="inferred from homology"/>
<keyword id="KW-1185">Reference proteome</keyword>
<keyword id="KW-0687">Ribonucleoprotein</keyword>
<keyword id="KW-0689">Ribosomal protein</keyword>
<gene>
    <name evidence="1" type="primary">rpmJ2</name>
    <name type="ordered locus">Krad_0712</name>
</gene>
<accession>A6W5W2</accession>